<protein>
    <recommendedName>
        <fullName evidence="1">tRNA uridine(34) hydroxylase</fullName>
        <ecNumber evidence="1">1.14.-.-</ecNumber>
    </recommendedName>
    <alternativeName>
        <fullName evidence="1">tRNA hydroxylation protein O</fullName>
    </alternativeName>
</protein>
<organism>
    <name type="scientific">Sinorhizobium fredii (strain NBRC 101917 / NGR234)</name>
    <dbReference type="NCBI Taxonomy" id="394"/>
    <lineage>
        <taxon>Bacteria</taxon>
        <taxon>Pseudomonadati</taxon>
        <taxon>Pseudomonadota</taxon>
        <taxon>Alphaproteobacteria</taxon>
        <taxon>Hyphomicrobiales</taxon>
        <taxon>Rhizobiaceae</taxon>
        <taxon>Sinorhizobium/Ensifer group</taxon>
        <taxon>Sinorhizobium</taxon>
    </lineage>
</organism>
<comment type="function">
    <text evidence="1">Catalyzes oxygen-dependent 5-hydroxyuridine (ho5U) modification at position 34 in tRNAs.</text>
</comment>
<comment type="catalytic activity">
    <reaction evidence="1">
        <text>uridine(34) in tRNA + AH2 + O2 = 5-hydroxyuridine(34) in tRNA + A + H2O</text>
        <dbReference type="Rhea" id="RHEA:64224"/>
        <dbReference type="Rhea" id="RHEA-COMP:11727"/>
        <dbReference type="Rhea" id="RHEA-COMP:13381"/>
        <dbReference type="ChEBI" id="CHEBI:13193"/>
        <dbReference type="ChEBI" id="CHEBI:15377"/>
        <dbReference type="ChEBI" id="CHEBI:15379"/>
        <dbReference type="ChEBI" id="CHEBI:17499"/>
        <dbReference type="ChEBI" id="CHEBI:65315"/>
        <dbReference type="ChEBI" id="CHEBI:136877"/>
    </reaction>
</comment>
<comment type="similarity">
    <text evidence="1">Belongs to the TrhO family.</text>
</comment>
<dbReference type="EC" id="1.14.-.-" evidence="1"/>
<dbReference type="EMBL" id="CP001389">
    <property type="protein sequence ID" value="ACP26680.1"/>
    <property type="molecule type" value="Genomic_DNA"/>
</dbReference>
<dbReference type="RefSeq" id="WP_012709435.1">
    <property type="nucleotide sequence ID" value="NC_012587.1"/>
</dbReference>
<dbReference type="RefSeq" id="YP_002827433.1">
    <property type="nucleotide sequence ID" value="NC_012587.1"/>
</dbReference>
<dbReference type="SMR" id="C3M8W9"/>
<dbReference type="STRING" id="394.NGR_c29370"/>
<dbReference type="KEGG" id="rhi:NGR_c29370"/>
<dbReference type="PATRIC" id="fig|394.7.peg.5775"/>
<dbReference type="eggNOG" id="COG1054">
    <property type="taxonomic scope" value="Bacteria"/>
</dbReference>
<dbReference type="HOGENOM" id="CLU_038878_0_0_5"/>
<dbReference type="OrthoDB" id="9778326at2"/>
<dbReference type="Proteomes" id="UP000001054">
    <property type="component" value="Chromosome"/>
</dbReference>
<dbReference type="GO" id="GO:0016705">
    <property type="term" value="F:oxidoreductase activity, acting on paired donors, with incorporation or reduction of molecular oxygen"/>
    <property type="evidence" value="ECO:0007669"/>
    <property type="project" value="UniProtKB-UniRule"/>
</dbReference>
<dbReference type="GO" id="GO:0006400">
    <property type="term" value="P:tRNA modification"/>
    <property type="evidence" value="ECO:0007669"/>
    <property type="project" value="UniProtKB-UniRule"/>
</dbReference>
<dbReference type="CDD" id="cd01518">
    <property type="entry name" value="RHOD_YceA"/>
    <property type="match status" value="1"/>
</dbReference>
<dbReference type="Gene3D" id="3.30.70.100">
    <property type="match status" value="1"/>
</dbReference>
<dbReference type="Gene3D" id="3.40.250.10">
    <property type="entry name" value="Rhodanese-like domain"/>
    <property type="match status" value="1"/>
</dbReference>
<dbReference type="HAMAP" id="MF_00469">
    <property type="entry name" value="TrhO"/>
    <property type="match status" value="1"/>
</dbReference>
<dbReference type="InterPro" id="IPR001763">
    <property type="entry name" value="Rhodanese-like_dom"/>
</dbReference>
<dbReference type="InterPro" id="IPR036873">
    <property type="entry name" value="Rhodanese-like_dom_sf"/>
</dbReference>
<dbReference type="InterPro" id="IPR020936">
    <property type="entry name" value="TrhO"/>
</dbReference>
<dbReference type="InterPro" id="IPR040503">
    <property type="entry name" value="TRHO_N"/>
</dbReference>
<dbReference type="NCBIfam" id="NF001136">
    <property type="entry name" value="PRK00142.1-4"/>
    <property type="match status" value="1"/>
</dbReference>
<dbReference type="PANTHER" id="PTHR43268:SF3">
    <property type="entry name" value="RHODANESE-LIKE DOMAIN-CONTAINING PROTEIN 7-RELATED"/>
    <property type="match status" value="1"/>
</dbReference>
<dbReference type="PANTHER" id="PTHR43268">
    <property type="entry name" value="THIOSULFATE SULFURTRANSFERASE/RHODANESE-LIKE DOMAIN-CONTAINING PROTEIN 2"/>
    <property type="match status" value="1"/>
</dbReference>
<dbReference type="Pfam" id="PF00581">
    <property type="entry name" value="Rhodanese"/>
    <property type="match status" value="1"/>
</dbReference>
<dbReference type="Pfam" id="PF17773">
    <property type="entry name" value="UPF0176_N"/>
    <property type="match status" value="1"/>
</dbReference>
<dbReference type="SMART" id="SM00450">
    <property type="entry name" value="RHOD"/>
    <property type="match status" value="1"/>
</dbReference>
<dbReference type="SUPFAM" id="SSF52821">
    <property type="entry name" value="Rhodanese/Cell cycle control phosphatase"/>
    <property type="match status" value="1"/>
</dbReference>
<dbReference type="PROSITE" id="PS50206">
    <property type="entry name" value="RHODANESE_3"/>
    <property type="match status" value="1"/>
</dbReference>
<keyword id="KW-0560">Oxidoreductase</keyword>
<keyword id="KW-1185">Reference proteome</keyword>
<keyword id="KW-0819">tRNA processing</keyword>
<reference key="1">
    <citation type="journal article" date="2009" name="Appl. Environ. Microbiol.">
        <title>Rhizobium sp. strain NGR234 possesses a remarkable number of secretion systems.</title>
        <authorList>
            <person name="Schmeisser C."/>
            <person name="Liesegang H."/>
            <person name="Krysciak D."/>
            <person name="Bakkou N."/>
            <person name="Le Quere A."/>
            <person name="Wollherr A."/>
            <person name="Heinemeyer I."/>
            <person name="Morgenstern B."/>
            <person name="Pommerening-Roeser A."/>
            <person name="Flores M."/>
            <person name="Palacios R."/>
            <person name="Brenner S."/>
            <person name="Gottschalk G."/>
            <person name="Schmitz R.A."/>
            <person name="Broughton W.J."/>
            <person name="Perret X."/>
            <person name="Strittmatter A.W."/>
            <person name="Streit W.R."/>
        </authorList>
    </citation>
    <scope>NUCLEOTIDE SEQUENCE [LARGE SCALE GENOMIC DNA]</scope>
    <source>
        <strain>NBRC 101917 / NGR234</strain>
    </source>
</reference>
<accession>C3M8W9</accession>
<feature type="chain" id="PRO_1000135473" description="tRNA uridine(34) hydroxylase">
    <location>
        <begin position="1"/>
        <end position="314"/>
    </location>
</feature>
<feature type="domain" description="Rhodanese" evidence="1">
    <location>
        <begin position="135"/>
        <end position="229"/>
    </location>
</feature>
<feature type="active site" description="Cysteine persulfide intermediate" evidence="1">
    <location>
        <position position="189"/>
    </location>
</feature>
<sequence length="314" mass="35171">MTDMLTTPRPEAQGQFLVAALYHFVAFPRFAEFRGPLQAVCDANGVKGTLLLAHEGINGTIAGTEAGIATVLAYLTAQPEFTGLEHKESRAAAMPFLRMKVRLKKEIVTMGVETIDPNQVVGTYVEPKDWNALIADPETLVIDTRNDYETAIGLFRGAVDPQTKTFREFPDWVRNHTGLHNKPKIAMYCTGGIRCEKATAFMKEQGFEEVYHLKGGILKYLEQIPAEESLWDGACFVFDERVSVTHGLAEGEHTLCHACRQPLTPEDVLSPHHEEGVSCVHCHAVRTEEDRERYRERQRQIALAKKRGERHLGS</sequence>
<proteinExistence type="inferred from homology"/>
<name>TRHO_SINFN</name>
<evidence type="ECO:0000255" key="1">
    <source>
        <dbReference type="HAMAP-Rule" id="MF_00469"/>
    </source>
</evidence>
<gene>
    <name evidence="1" type="primary">trhO</name>
    <name type="ordered locus">NGR_c29370</name>
</gene>